<gene>
    <name evidence="1" type="primary">dnaK</name>
    <name type="ordered locus">CLI_3012</name>
</gene>
<dbReference type="EMBL" id="CP000728">
    <property type="protein sequence ID" value="ABS40243.1"/>
    <property type="molecule type" value="Genomic_DNA"/>
</dbReference>
<dbReference type="RefSeq" id="WP_003357980.1">
    <property type="nucleotide sequence ID" value="NC_009699.1"/>
</dbReference>
<dbReference type="SMR" id="A7GHH6"/>
<dbReference type="GeneID" id="5184256"/>
<dbReference type="KEGG" id="cbf:CLI_3012"/>
<dbReference type="HOGENOM" id="CLU_005965_2_4_9"/>
<dbReference type="Proteomes" id="UP000002410">
    <property type="component" value="Chromosome"/>
</dbReference>
<dbReference type="GO" id="GO:0005524">
    <property type="term" value="F:ATP binding"/>
    <property type="evidence" value="ECO:0007669"/>
    <property type="project" value="UniProtKB-UniRule"/>
</dbReference>
<dbReference type="GO" id="GO:0140662">
    <property type="term" value="F:ATP-dependent protein folding chaperone"/>
    <property type="evidence" value="ECO:0007669"/>
    <property type="project" value="InterPro"/>
</dbReference>
<dbReference type="GO" id="GO:0051082">
    <property type="term" value="F:unfolded protein binding"/>
    <property type="evidence" value="ECO:0007669"/>
    <property type="project" value="InterPro"/>
</dbReference>
<dbReference type="CDD" id="cd10234">
    <property type="entry name" value="ASKHA_NBD_HSP70_DnaK-like"/>
    <property type="match status" value="1"/>
</dbReference>
<dbReference type="FunFam" id="2.60.34.10:FF:000014">
    <property type="entry name" value="Chaperone protein DnaK HSP70"/>
    <property type="match status" value="1"/>
</dbReference>
<dbReference type="FunFam" id="1.20.1270.10:FF:000001">
    <property type="entry name" value="Molecular chaperone DnaK"/>
    <property type="match status" value="1"/>
</dbReference>
<dbReference type="FunFam" id="3.30.420.40:FF:000071">
    <property type="entry name" value="Molecular chaperone DnaK"/>
    <property type="match status" value="1"/>
</dbReference>
<dbReference type="FunFam" id="3.90.640.10:FF:000003">
    <property type="entry name" value="Molecular chaperone DnaK"/>
    <property type="match status" value="1"/>
</dbReference>
<dbReference type="Gene3D" id="1.20.1270.10">
    <property type="match status" value="1"/>
</dbReference>
<dbReference type="Gene3D" id="3.30.420.40">
    <property type="match status" value="2"/>
</dbReference>
<dbReference type="Gene3D" id="3.90.640.10">
    <property type="entry name" value="Actin, Chain A, domain 4"/>
    <property type="match status" value="1"/>
</dbReference>
<dbReference type="Gene3D" id="2.60.34.10">
    <property type="entry name" value="Substrate Binding Domain Of DNAk, Chain A, domain 1"/>
    <property type="match status" value="1"/>
</dbReference>
<dbReference type="HAMAP" id="MF_00332">
    <property type="entry name" value="DnaK"/>
    <property type="match status" value="1"/>
</dbReference>
<dbReference type="InterPro" id="IPR043129">
    <property type="entry name" value="ATPase_NBD"/>
</dbReference>
<dbReference type="InterPro" id="IPR012725">
    <property type="entry name" value="Chaperone_DnaK"/>
</dbReference>
<dbReference type="InterPro" id="IPR018181">
    <property type="entry name" value="Heat_shock_70_CS"/>
</dbReference>
<dbReference type="InterPro" id="IPR029048">
    <property type="entry name" value="HSP70_C_sf"/>
</dbReference>
<dbReference type="InterPro" id="IPR029047">
    <property type="entry name" value="HSP70_peptide-bd_sf"/>
</dbReference>
<dbReference type="InterPro" id="IPR013126">
    <property type="entry name" value="Hsp_70_fam"/>
</dbReference>
<dbReference type="NCBIfam" id="NF001413">
    <property type="entry name" value="PRK00290.1"/>
    <property type="match status" value="1"/>
</dbReference>
<dbReference type="NCBIfam" id="TIGR02350">
    <property type="entry name" value="prok_dnaK"/>
    <property type="match status" value="1"/>
</dbReference>
<dbReference type="PANTHER" id="PTHR19375">
    <property type="entry name" value="HEAT SHOCK PROTEIN 70KDA"/>
    <property type="match status" value="1"/>
</dbReference>
<dbReference type="Pfam" id="PF00012">
    <property type="entry name" value="HSP70"/>
    <property type="match status" value="1"/>
</dbReference>
<dbReference type="PRINTS" id="PR00301">
    <property type="entry name" value="HEATSHOCK70"/>
</dbReference>
<dbReference type="SUPFAM" id="SSF53067">
    <property type="entry name" value="Actin-like ATPase domain"/>
    <property type="match status" value="2"/>
</dbReference>
<dbReference type="SUPFAM" id="SSF100934">
    <property type="entry name" value="Heat shock protein 70kD (HSP70), C-terminal subdomain"/>
    <property type="match status" value="1"/>
</dbReference>
<dbReference type="SUPFAM" id="SSF100920">
    <property type="entry name" value="Heat shock protein 70kD (HSP70), peptide-binding domain"/>
    <property type="match status" value="1"/>
</dbReference>
<dbReference type="PROSITE" id="PS00297">
    <property type="entry name" value="HSP70_1"/>
    <property type="match status" value="1"/>
</dbReference>
<dbReference type="PROSITE" id="PS00329">
    <property type="entry name" value="HSP70_2"/>
    <property type="match status" value="1"/>
</dbReference>
<dbReference type="PROSITE" id="PS01036">
    <property type="entry name" value="HSP70_3"/>
    <property type="match status" value="1"/>
</dbReference>
<sequence length="623" mass="66832">MAKIIGIDLGTTNSCVSVMEGGEPVVIPNAEGSRTTPSVVSFQANGERLIGQVAKRQAITNPEKTIISIKRYMGTDHKVNIDSTEYTPQQISAMVLQKLKADAEAYLGEKVTQAVITVPAYFNDSQRQATKDAGKIAGLEVLRIINEPTAASLAYGLDKMDTNEKILVYDLGGGTFDVSILELGDGVFEVKATNGDTKLGGDDFDQKLIDYIAETFKAENGIDLRNDKMAIQRLKEAAEKAKIELSSATQTNINLPFITADATGPKHIDMNLTRAKFNELTHDLVQRTLEPIKKSLEGSGYAMSDIDKIIMVGGSTRIPAVQDAVKDFTGKELSKGVNPDEVVAMGAAIQAGVLTGEVKDVLLLDVTPLTLGIETFGGVSTTLIEKNTTIPTRKSQVFSTAADGQTSVEIHVVQGERSMAADNKTLGRFTLSGIAPAPRGIPQIEVTFDIDANGIVNVSAKDKGTGKEANITITASTNLTDDEIEKAVNEAKKFEAEDKKRKESIEIKNNADQIVYQTEKTLTDLGDKVSAEDKAQIEEKVKAVKDVKDGEDLEAIKKATEDLTQTFYGISSKIYQQANPEGAQGAGFDPNNMGGANAGNASAGNDKKDDNVVDADFKVEDDK</sequence>
<organism>
    <name type="scientific">Clostridium botulinum (strain Langeland / NCTC 10281 / Type F)</name>
    <dbReference type="NCBI Taxonomy" id="441772"/>
    <lineage>
        <taxon>Bacteria</taxon>
        <taxon>Bacillati</taxon>
        <taxon>Bacillota</taxon>
        <taxon>Clostridia</taxon>
        <taxon>Eubacteriales</taxon>
        <taxon>Clostridiaceae</taxon>
        <taxon>Clostridium</taxon>
    </lineage>
</organism>
<protein>
    <recommendedName>
        <fullName evidence="1">Chaperone protein DnaK</fullName>
    </recommendedName>
    <alternativeName>
        <fullName evidence="1">HSP70</fullName>
    </alternativeName>
    <alternativeName>
        <fullName evidence="1">Heat shock 70 kDa protein</fullName>
    </alternativeName>
    <alternativeName>
        <fullName evidence="1">Heat shock protein 70</fullName>
    </alternativeName>
</protein>
<reference key="1">
    <citation type="submission" date="2007-06" db="EMBL/GenBank/DDBJ databases">
        <authorList>
            <person name="Brinkac L.M."/>
            <person name="Daugherty S."/>
            <person name="Dodson R.J."/>
            <person name="Madupu R."/>
            <person name="Brown J.L."/>
            <person name="Bruce D."/>
            <person name="Detter C."/>
            <person name="Munk C."/>
            <person name="Smith L.A."/>
            <person name="Smith T.J."/>
            <person name="White O."/>
            <person name="Brettin T.S."/>
        </authorList>
    </citation>
    <scope>NUCLEOTIDE SEQUENCE [LARGE SCALE GENOMIC DNA]</scope>
    <source>
        <strain>Langeland / NCTC 10281 / Type F</strain>
    </source>
</reference>
<name>DNAK_CLOBL</name>
<comment type="function">
    <text evidence="1">Acts as a chaperone.</text>
</comment>
<comment type="induction">
    <text evidence="1">By stress conditions e.g. heat shock.</text>
</comment>
<comment type="similarity">
    <text evidence="1">Belongs to the heat shock protein 70 family.</text>
</comment>
<evidence type="ECO:0000255" key="1">
    <source>
        <dbReference type="HAMAP-Rule" id="MF_00332"/>
    </source>
</evidence>
<evidence type="ECO:0000256" key="2">
    <source>
        <dbReference type="SAM" id="MobiDB-lite"/>
    </source>
</evidence>
<keyword id="KW-0067">ATP-binding</keyword>
<keyword id="KW-0143">Chaperone</keyword>
<keyword id="KW-0547">Nucleotide-binding</keyword>
<keyword id="KW-0597">Phosphoprotein</keyword>
<keyword id="KW-0346">Stress response</keyword>
<proteinExistence type="inferred from homology"/>
<accession>A7GHH6</accession>
<feature type="chain" id="PRO_1000059541" description="Chaperone protein DnaK">
    <location>
        <begin position="1"/>
        <end position="623"/>
    </location>
</feature>
<feature type="region of interest" description="Disordered" evidence="2">
    <location>
        <begin position="580"/>
        <end position="623"/>
    </location>
</feature>
<feature type="compositionally biased region" description="Low complexity" evidence="2">
    <location>
        <begin position="591"/>
        <end position="604"/>
    </location>
</feature>
<feature type="compositionally biased region" description="Basic and acidic residues" evidence="2">
    <location>
        <begin position="605"/>
        <end position="623"/>
    </location>
</feature>
<feature type="modified residue" description="Phosphothreonine; by autocatalysis" evidence="1">
    <location>
        <position position="175"/>
    </location>
</feature>